<accession>A1JIT1</accession>
<comment type="function">
    <text evidence="1">Binds to the 23S rRNA.</text>
</comment>
<comment type="similarity">
    <text evidence="1">Belongs to the bacterial ribosomal protein bL9 family.</text>
</comment>
<reference key="1">
    <citation type="journal article" date="2006" name="PLoS Genet.">
        <title>The complete genome sequence and comparative genome analysis of the high pathogenicity Yersinia enterocolitica strain 8081.</title>
        <authorList>
            <person name="Thomson N.R."/>
            <person name="Howard S."/>
            <person name="Wren B.W."/>
            <person name="Holden M.T.G."/>
            <person name="Crossman L."/>
            <person name="Challis G.L."/>
            <person name="Churcher C."/>
            <person name="Mungall K."/>
            <person name="Brooks K."/>
            <person name="Chillingworth T."/>
            <person name="Feltwell T."/>
            <person name="Abdellah Z."/>
            <person name="Hauser H."/>
            <person name="Jagels K."/>
            <person name="Maddison M."/>
            <person name="Moule S."/>
            <person name="Sanders M."/>
            <person name="Whitehead S."/>
            <person name="Quail M.A."/>
            <person name="Dougan G."/>
            <person name="Parkhill J."/>
            <person name="Prentice M.B."/>
        </authorList>
    </citation>
    <scope>NUCLEOTIDE SEQUENCE [LARGE SCALE GENOMIC DNA]</scope>
    <source>
        <strain>NCTC 13174 / 8081</strain>
    </source>
</reference>
<evidence type="ECO:0000255" key="1">
    <source>
        <dbReference type="HAMAP-Rule" id="MF_00503"/>
    </source>
</evidence>
<evidence type="ECO:0000305" key="2"/>
<feature type="chain" id="PRO_1000014885" description="Large ribosomal subunit protein bL9">
    <location>
        <begin position="1"/>
        <end position="150"/>
    </location>
</feature>
<organism>
    <name type="scientific">Yersinia enterocolitica serotype O:8 / biotype 1B (strain NCTC 13174 / 8081)</name>
    <dbReference type="NCBI Taxonomy" id="393305"/>
    <lineage>
        <taxon>Bacteria</taxon>
        <taxon>Pseudomonadati</taxon>
        <taxon>Pseudomonadota</taxon>
        <taxon>Gammaproteobacteria</taxon>
        <taxon>Enterobacterales</taxon>
        <taxon>Yersiniaceae</taxon>
        <taxon>Yersinia</taxon>
    </lineage>
</organism>
<keyword id="KW-0687">Ribonucleoprotein</keyword>
<keyword id="KW-0689">Ribosomal protein</keyword>
<keyword id="KW-0694">RNA-binding</keyword>
<keyword id="KW-0699">rRNA-binding</keyword>
<gene>
    <name evidence="1" type="primary">rplI</name>
    <name type="ordered locus">YE0395</name>
</gene>
<proteinExistence type="inferred from homology"/>
<protein>
    <recommendedName>
        <fullName evidence="1">Large ribosomal subunit protein bL9</fullName>
    </recommendedName>
    <alternativeName>
        <fullName evidence="2">50S ribosomal protein L9</fullName>
    </alternativeName>
</protein>
<name>RL9_YERE8</name>
<dbReference type="EMBL" id="AM286415">
    <property type="protein sequence ID" value="CAL10522.1"/>
    <property type="molecule type" value="Genomic_DNA"/>
</dbReference>
<dbReference type="RefSeq" id="WP_005175476.1">
    <property type="nucleotide sequence ID" value="NC_008800.1"/>
</dbReference>
<dbReference type="RefSeq" id="YP_001004768.1">
    <property type="nucleotide sequence ID" value="NC_008800.1"/>
</dbReference>
<dbReference type="SMR" id="A1JIT1"/>
<dbReference type="GeneID" id="93968873"/>
<dbReference type="KEGG" id="yen:YE0395"/>
<dbReference type="PATRIC" id="fig|393305.7.peg.489"/>
<dbReference type="eggNOG" id="COG0359">
    <property type="taxonomic scope" value="Bacteria"/>
</dbReference>
<dbReference type="HOGENOM" id="CLU_078938_4_1_6"/>
<dbReference type="OrthoDB" id="9788336at2"/>
<dbReference type="Proteomes" id="UP000000642">
    <property type="component" value="Chromosome"/>
</dbReference>
<dbReference type="GO" id="GO:1990904">
    <property type="term" value="C:ribonucleoprotein complex"/>
    <property type="evidence" value="ECO:0007669"/>
    <property type="project" value="UniProtKB-KW"/>
</dbReference>
<dbReference type="GO" id="GO:0005840">
    <property type="term" value="C:ribosome"/>
    <property type="evidence" value="ECO:0007669"/>
    <property type="project" value="UniProtKB-KW"/>
</dbReference>
<dbReference type="GO" id="GO:0019843">
    <property type="term" value="F:rRNA binding"/>
    <property type="evidence" value="ECO:0007669"/>
    <property type="project" value="UniProtKB-UniRule"/>
</dbReference>
<dbReference type="GO" id="GO:0003735">
    <property type="term" value="F:structural constituent of ribosome"/>
    <property type="evidence" value="ECO:0007669"/>
    <property type="project" value="InterPro"/>
</dbReference>
<dbReference type="GO" id="GO:0006412">
    <property type="term" value="P:translation"/>
    <property type="evidence" value="ECO:0007669"/>
    <property type="project" value="UniProtKB-UniRule"/>
</dbReference>
<dbReference type="FunFam" id="3.10.430.100:FF:000001">
    <property type="entry name" value="50S ribosomal protein L9"/>
    <property type="match status" value="1"/>
</dbReference>
<dbReference type="FunFam" id="3.40.5.10:FF:000001">
    <property type="entry name" value="50S ribosomal protein L9"/>
    <property type="match status" value="1"/>
</dbReference>
<dbReference type="Gene3D" id="3.10.430.100">
    <property type="entry name" value="Ribosomal protein L9, C-terminal domain"/>
    <property type="match status" value="1"/>
</dbReference>
<dbReference type="Gene3D" id="3.40.5.10">
    <property type="entry name" value="Ribosomal protein L9, N-terminal domain"/>
    <property type="match status" value="1"/>
</dbReference>
<dbReference type="HAMAP" id="MF_00503">
    <property type="entry name" value="Ribosomal_bL9"/>
    <property type="match status" value="1"/>
</dbReference>
<dbReference type="InterPro" id="IPR000244">
    <property type="entry name" value="Ribosomal_bL9"/>
</dbReference>
<dbReference type="InterPro" id="IPR009027">
    <property type="entry name" value="Ribosomal_bL9/RNase_H1_N"/>
</dbReference>
<dbReference type="InterPro" id="IPR020594">
    <property type="entry name" value="Ribosomal_bL9_bac/chp"/>
</dbReference>
<dbReference type="InterPro" id="IPR020069">
    <property type="entry name" value="Ribosomal_bL9_C"/>
</dbReference>
<dbReference type="InterPro" id="IPR036791">
    <property type="entry name" value="Ribosomal_bL9_C_sf"/>
</dbReference>
<dbReference type="InterPro" id="IPR020070">
    <property type="entry name" value="Ribosomal_bL9_N"/>
</dbReference>
<dbReference type="InterPro" id="IPR036935">
    <property type="entry name" value="Ribosomal_bL9_N_sf"/>
</dbReference>
<dbReference type="NCBIfam" id="TIGR00158">
    <property type="entry name" value="L9"/>
    <property type="match status" value="1"/>
</dbReference>
<dbReference type="PANTHER" id="PTHR21368">
    <property type="entry name" value="50S RIBOSOMAL PROTEIN L9"/>
    <property type="match status" value="1"/>
</dbReference>
<dbReference type="Pfam" id="PF03948">
    <property type="entry name" value="Ribosomal_L9_C"/>
    <property type="match status" value="1"/>
</dbReference>
<dbReference type="Pfam" id="PF01281">
    <property type="entry name" value="Ribosomal_L9_N"/>
    <property type="match status" value="1"/>
</dbReference>
<dbReference type="SUPFAM" id="SSF55658">
    <property type="entry name" value="L9 N-domain-like"/>
    <property type="match status" value="1"/>
</dbReference>
<dbReference type="SUPFAM" id="SSF55653">
    <property type="entry name" value="Ribosomal protein L9 C-domain"/>
    <property type="match status" value="1"/>
</dbReference>
<dbReference type="PROSITE" id="PS00651">
    <property type="entry name" value="RIBOSOMAL_L9"/>
    <property type="match status" value="1"/>
</dbReference>
<sequence>MQVILLDKVANLGSLGDQVNVKAGYARNFLVPQGKAVPATKKNVEFFEARRAELEAKLAGVLAAAEARATKINELVSVTIASKAGDEGKLFGSIGTRDIADAVTAAGVEVAKSEVRLPNGVLRTTGDHEVHFQVHSDVFAKLNVIVVPEA</sequence>